<reference evidence="7" key="1">
    <citation type="journal article" date="2001" name="J. Bacteriol.">
        <title>Genome of the bacterium Streptococcus pneumoniae strain R6.</title>
        <authorList>
            <person name="Hoskins J."/>
            <person name="Alborn W.E. Jr."/>
            <person name="Arnold J."/>
            <person name="Blaszczak L.C."/>
            <person name="Burgett S."/>
            <person name="DeHoff B.S."/>
            <person name="Estrem S.T."/>
            <person name="Fritz L."/>
            <person name="Fu D.-J."/>
            <person name="Fuller W."/>
            <person name="Geringer C."/>
            <person name="Gilmour R."/>
            <person name="Glass J.S."/>
            <person name="Khoja H."/>
            <person name="Kraft A.R."/>
            <person name="Lagace R.E."/>
            <person name="LeBlanc D.J."/>
            <person name="Lee L.N."/>
            <person name="Lefkowitz E.J."/>
            <person name="Lu J."/>
            <person name="Matsushima P."/>
            <person name="McAhren S.M."/>
            <person name="McHenney M."/>
            <person name="McLeaster K."/>
            <person name="Mundy C.W."/>
            <person name="Nicas T.I."/>
            <person name="Norris F.H."/>
            <person name="O'Gara M."/>
            <person name="Peery R.B."/>
            <person name="Robertson G.T."/>
            <person name="Rockey P."/>
            <person name="Sun P.-M."/>
            <person name="Winkler M.E."/>
            <person name="Yang Y."/>
            <person name="Young-Bellido M."/>
            <person name="Zhao G."/>
            <person name="Zook C.A."/>
            <person name="Baltz R.H."/>
            <person name="Jaskunas S.R."/>
            <person name="Rosteck P.R. Jr."/>
            <person name="Skatrud P.L."/>
            <person name="Glass J.I."/>
        </authorList>
    </citation>
    <scope>NUCLEOTIDE SEQUENCE [LARGE SCALE GENOMIC DNA]</scope>
    <source>
        <strain evidence="7">ATCC BAA-255 / R6</strain>
    </source>
</reference>
<reference evidence="5" key="2">
    <citation type="journal article" date="2013" name="PLoS ONE">
        <title>NADH oxidase functions as an adhesin in Streptococcus pneumoniae and elicits a protective immune response in mice.</title>
        <authorList>
            <person name="Muchnik L."/>
            <person name="Adawi A."/>
            <person name="Ohayon A."/>
            <person name="Dotan S."/>
            <person name="Malka I."/>
            <person name="Azriel S."/>
            <person name="Shagan M."/>
            <person name="Portnoi M."/>
            <person name="Kafka D."/>
            <person name="Nahmani H."/>
            <person name="Porgador A."/>
            <person name="Gershoni J.M."/>
            <person name="Morrison D.A."/>
            <person name="Mitchell A."/>
            <person name="Tal M."/>
            <person name="Ellis R."/>
            <person name="Dagan R."/>
            <person name="Nebenzahl Y.M."/>
        </authorList>
    </citation>
    <scope>FUNCTION</scope>
    <scope>SUBCELLULAR LOCATION</scope>
    <scope>DISRUPTION PHENOTYPE</scope>
    <scope>BIOTECHNOLOGY</scope>
    <source>
        <strain evidence="7">ATCC BAA-255 / R6</strain>
        <strain>WU2 / Serotype 3</strain>
    </source>
</reference>
<feature type="chain" id="PRO_0000458485" description="NADH oxidase">
    <location>
        <begin position="1"/>
        <end position="459"/>
    </location>
</feature>
<feature type="active site" description="Proton acceptor" evidence="2">
    <location>
        <position position="11"/>
    </location>
</feature>
<feature type="active site" description="Redox-active" evidence="3">
    <location>
        <position position="44"/>
    </location>
</feature>
<feature type="binding site" evidence="3">
    <location>
        <position position="10"/>
    </location>
    <ligand>
        <name>FAD</name>
        <dbReference type="ChEBI" id="CHEBI:57692"/>
    </ligand>
</feature>
<feature type="binding site" evidence="3">
    <location>
        <position position="12"/>
    </location>
    <ligand>
        <name>FAD</name>
        <dbReference type="ChEBI" id="CHEBI:57692"/>
    </ligand>
</feature>
<feature type="binding site" evidence="3">
    <location>
        <position position="34"/>
    </location>
    <ligand>
        <name>FAD</name>
        <dbReference type="ChEBI" id="CHEBI:57692"/>
    </ligand>
</feature>
<feature type="binding site" evidence="3">
    <location>
        <position position="35"/>
    </location>
    <ligand>
        <name>FAD</name>
        <dbReference type="ChEBI" id="CHEBI:57692"/>
    </ligand>
</feature>
<feature type="binding site" evidence="3">
    <location>
        <position position="44"/>
    </location>
    <ligand>
        <name>FAD</name>
        <dbReference type="ChEBI" id="CHEBI:57692"/>
    </ligand>
</feature>
<feature type="binding site" evidence="3">
    <location>
        <position position="81"/>
    </location>
    <ligand>
        <name>FAD</name>
        <dbReference type="ChEBI" id="CHEBI:57692"/>
    </ligand>
</feature>
<feature type="binding site" evidence="3">
    <location>
        <position position="110"/>
    </location>
    <ligand>
        <name>FAD</name>
        <dbReference type="ChEBI" id="CHEBI:57692"/>
    </ligand>
</feature>
<feature type="binding site" evidence="3">
    <location>
        <position position="113"/>
    </location>
    <ligand>
        <name>FAD</name>
        <dbReference type="ChEBI" id="CHEBI:57692"/>
    </ligand>
</feature>
<feature type="binding site" evidence="3">
    <location>
        <position position="143"/>
    </location>
    <ligand>
        <name>FAD</name>
        <dbReference type="ChEBI" id="CHEBI:57692"/>
    </ligand>
</feature>
<feature type="binding site" evidence="3">
    <location>
        <position position="172"/>
    </location>
    <ligand>
        <name>FAD</name>
        <dbReference type="ChEBI" id="CHEBI:57692"/>
    </ligand>
</feature>
<feature type="binding site" evidence="2">
    <location>
        <position position="173"/>
    </location>
    <ligand>
        <name>NAD(+)</name>
        <dbReference type="ChEBI" id="CHEBI:57540"/>
    </ligand>
</feature>
<feature type="binding site" evidence="2">
    <location>
        <position position="192"/>
    </location>
    <ligand>
        <name>NAD(+)</name>
        <dbReference type="ChEBI" id="CHEBI:57540"/>
    </ligand>
</feature>
<feature type="binding site" evidence="2">
    <location>
        <position position="201"/>
    </location>
    <ligand>
        <name>NAD(+)</name>
        <dbReference type="ChEBI" id="CHEBI:57540"/>
    </ligand>
</feature>
<feature type="binding site" evidence="2">
    <location>
        <position position="256"/>
    </location>
    <ligand>
        <name>NAD(+)</name>
        <dbReference type="ChEBI" id="CHEBI:57540"/>
    </ligand>
</feature>
<feature type="binding site" evidence="3">
    <location>
        <position position="294"/>
    </location>
    <ligand>
        <name>FAD</name>
        <dbReference type="ChEBI" id="CHEBI:57692"/>
    </ligand>
</feature>
<feature type="binding site" evidence="2">
    <location>
        <position position="310"/>
    </location>
    <ligand>
        <name>NAD(+)</name>
        <dbReference type="ChEBI" id="CHEBI:57540"/>
    </ligand>
</feature>
<feature type="binding site" evidence="3">
    <location>
        <position position="311"/>
    </location>
    <ligand>
        <name>FAD</name>
        <dbReference type="ChEBI" id="CHEBI:57692"/>
    </ligand>
</feature>
<feature type="binding site" evidence="3">
    <location>
        <position position="312"/>
    </location>
    <ligand>
        <name>FAD</name>
        <dbReference type="ChEBI" id="CHEBI:57692"/>
    </ligand>
</feature>
<feature type="binding site" evidence="3">
    <location>
        <position position="313"/>
    </location>
    <ligand>
        <name>FAD</name>
        <dbReference type="ChEBI" id="CHEBI:57692"/>
    </ligand>
</feature>
<feature type="binding site" evidence="2">
    <location>
        <position position="341"/>
    </location>
    <ligand>
        <name>NAD(+)</name>
        <dbReference type="ChEBI" id="CHEBI:57540"/>
    </ligand>
</feature>
<feature type="binding site" evidence="3">
    <location>
        <position position="439"/>
    </location>
    <ligand>
        <name>FAD</name>
        <dbReference type="ChEBI" id="CHEBI:57692"/>
    </ligand>
</feature>
<feature type="modified residue" description="Cysteine sulfinic acid (-SO2H)" evidence="3">
    <location>
        <position position="44"/>
    </location>
</feature>
<organism evidence="7">
    <name type="scientific">Streptococcus pneumoniae (strain ATCC BAA-255 / R6)</name>
    <dbReference type="NCBI Taxonomy" id="171101"/>
    <lineage>
        <taxon>Bacteria</taxon>
        <taxon>Bacillati</taxon>
        <taxon>Bacillota</taxon>
        <taxon>Bacilli</taxon>
        <taxon>Lactobacillales</taxon>
        <taxon>Streptococcaceae</taxon>
        <taxon>Streptococcus</taxon>
    </lineage>
</organism>
<evidence type="ECO:0000250" key="1">
    <source>
        <dbReference type="UniProtKB" id="A0A0H2UQZ4"/>
    </source>
</evidence>
<evidence type="ECO:0000250" key="2">
    <source>
        <dbReference type="UniProtKB" id="P37062"/>
    </source>
</evidence>
<evidence type="ECO:0000250" key="3">
    <source>
        <dbReference type="UniProtKB" id="Q5XC60"/>
    </source>
</evidence>
<evidence type="ECO:0000269" key="4">
    <source>
    </source>
</evidence>
<evidence type="ECO:0000305" key="5"/>
<evidence type="ECO:0000312" key="6">
    <source>
        <dbReference type="EMBL" id="AAL00127.1"/>
    </source>
</evidence>
<evidence type="ECO:0000312" key="7">
    <source>
        <dbReference type="Proteomes" id="UP000000586"/>
    </source>
</evidence>
<dbReference type="EC" id="1.6.3.4" evidence="3"/>
<dbReference type="EMBL" id="AE007317">
    <property type="protein sequence ID" value="AAL00127.1"/>
    <property type="molecule type" value="Genomic_DNA"/>
</dbReference>
<dbReference type="PIR" id="B98037">
    <property type="entry name" value="B98037"/>
</dbReference>
<dbReference type="RefSeq" id="NP_358916.1">
    <property type="nucleotide sequence ID" value="NC_003098.1"/>
</dbReference>
<dbReference type="RefSeq" id="WP_000036771.1">
    <property type="nucleotide sequence ID" value="NC_003098.1"/>
</dbReference>
<dbReference type="SMR" id="Q8DP70"/>
<dbReference type="STRING" id="171101.spr1323"/>
<dbReference type="KEGG" id="spr:spr1323"/>
<dbReference type="PATRIC" id="fig|171101.6.peg.1435"/>
<dbReference type="eggNOG" id="COG0446">
    <property type="taxonomic scope" value="Bacteria"/>
</dbReference>
<dbReference type="HOGENOM" id="CLU_003291_1_0_9"/>
<dbReference type="Proteomes" id="UP000000586">
    <property type="component" value="Chromosome"/>
</dbReference>
<dbReference type="GO" id="GO:0005576">
    <property type="term" value="C:extracellular region"/>
    <property type="evidence" value="ECO:0007669"/>
    <property type="project" value="UniProtKB-KW"/>
</dbReference>
<dbReference type="GO" id="GO:0016491">
    <property type="term" value="F:oxidoreductase activity"/>
    <property type="evidence" value="ECO:0007669"/>
    <property type="project" value="UniProtKB-KW"/>
</dbReference>
<dbReference type="Gene3D" id="3.30.390.30">
    <property type="match status" value="1"/>
</dbReference>
<dbReference type="Gene3D" id="3.50.50.60">
    <property type="entry name" value="FAD/NAD(P)-binding domain"/>
    <property type="match status" value="2"/>
</dbReference>
<dbReference type="InterPro" id="IPR050260">
    <property type="entry name" value="FAD-bd_OxRdtase"/>
</dbReference>
<dbReference type="InterPro" id="IPR036188">
    <property type="entry name" value="FAD/NAD-bd_sf"/>
</dbReference>
<dbReference type="InterPro" id="IPR023753">
    <property type="entry name" value="FAD/NAD-binding_dom"/>
</dbReference>
<dbReference type="InterPro" id="IPR016156">
    <property type="entry name" value="FAD/NAD-linked_Rdtase_dimer_sf"/>
</dbReference>
<dbReference type="InterPro" id="IPR004099">
    <property type="entry name" value="Pyr_nucl-diS_OxRdtase_dimer"/>
</dbReference>
<dbReference type="NCBIfam" id="NF046103">
    <property type="entry name" value="NOXase_Strep"/>
    <property type="match status" value="1"/>
</dbReference>
<dbReference type="PANTHER" id="PTHR43429:SF1">
    <property type="entry name" value="NAD(P)H SULFUR OXIDOREDUCTASE (COA-DEPENDENT)"/>
    <property type="match status" value="1"/>
</dbReference>
<dbReference type="PANTHER" id="PTHR43429">
    <property type="entry name" value="PYRIDINE NUCLEOTIDE-DISULFIDE OXIDOREDUCTASE DOMAIN-CONTAINING"/>
    <property type="match status" value="1"/>
</dbReference>
<dbReference type="Pfam" id="PF07992">
    <property type="entry name" value="Pyr_redox_2"/>
    <property type="match status" value="1"/>
</dbReference>
<dbReference type="Pfam" id="PF02852">
    <property type="entry name" value="Pyr_redox_dim"/>
    <property type="match status" value="1"/>
</dbReference>
<dbReference type="PRINTS" id="PR00368">
    <property type="entry name" value="FADPNR"/>
</dbReference>
<dbReference type="PRINTS" id="PR00411">
    <property type="entry name" value="PNDRDTASEI"/>
</dbReference>
<dbReference type="SUPFAM" id="SSF51905">
    <property type="entry name" value="FAD/NAD(P)-binding domain"/>
    <property type="match status" value="1"/>
</dbReference>
<dbReference type="SUPFAM" id="SSF55424">
    <property type="entry name" value="FAD/NAD-linked reductases, dimerisation (C-terminal) domain"/>
    <property type="match status" value="1"/>
</dbReference>
<gene>
    <name evidence="6" type="primary">nox</name>
    <name evidence="6" type="ordered locus">spr1323</name>
</gene>
<keyword id="KW-0134">Cell wall</keyword>
<keyword id="KW-0274">FAD</keyword>
<keyword id="KW-0285">Flavoprotein</keyword>
<keyword id="KW-0520">NAD</keyword>
<keyword id="KW-0558">Oxidation</keyword>
<keyword id="KW-0560">Oxidoreductase</keyword>
<keyword id="KW-0676">Redox-active center</keyword>
<keyword id="KW-1185">Reference proteome</keyword>
<keyword id="KW-0964">Secreted</keyword>
<name>NAOX_STRR6</name>
<accession>Q8DP70</accession>
<comment type="function">
    <text evidence="1 3 4">Catalyzes the four-electron reduction of molecular oxygen to water (By similarity). Plays a role in redox balance maintenance (By similarity). May be involved in mediating bacterial adhesion to host cells (PubMed:23577197). May be considered a potential virulence factor (PubMed:23577197).</text>
</comment>
<comment type="catalytic activity">
    <molecule>NADH oxidase</molecule>
    <reaction evidence="3">
        <text>2 NADH + O2 + 2 H(+) = 2 NAD(+) + 2 H2O</text>
        <dbReference type="Rhea" id="RHEA:37799"/>
        <dbReference type="ChEBI" id="CHEBI:15377"/>
        <dbReference type="ChEBI" id="CHEBI:15378"/>
        <dbReference type="ChEBI" id="CHEBI:15379"/>
        <dbReference type="ChEBI" id="CHEBI:57540"/>
        <dbReference type="ChEBI" id="CHEBI:57945"/>
        <dbReference type="EC" id="1.6.3.4"/>
    </reaction>
</comment>
<comment type="cofactor">
    <cofactor evidence="3">
        <name>FAD</name>
        <dbReference type="ChEBI" id="CHEBI:57692"/>
    </cofactor>
    <text evidence="3">Binds 1 FAD per subunit.</text>
</comment>
<comment type="subcellular location">
    <subcellularLocation>
        <location evidence="4">Secreted</location>
        <location evidence="4">Cell wall</location>
    </subcellularLocation>
    <text evidence="4">Localized to exterior of cell wall.</text>
</comment>
<comment type="disruption phenotype">
    <text evidence="4">Not detected on the exterior cell-wall of mutant R6 strain (PubMed:23577197). Attenuates virulence in mouse BALB/c intranasal infection model (PubMed:23577197). Significantly reduces number of mutant WU2 strain bacteria recovered from the nasopharynx and the lungs in a BALB/c mouse intranasal infection model (PubMed:23577197).</text>
</comment>
<comment type="biotechnology">
    <text evidence="4">Shows antigenicity in humans and elicits protective immune response in a mouse model, thereby suggesting may be a future vaccine candidate.</text>
</comment>
<comment type="similarity">
    <text evidence="5">Belongs to the class-III pyridine nucleotide-disulfide oxidoreductase family.</text>
</comment>
<proteinExistence type="evidence at protein level"/>
<protein>
    <recommendedName>
        <fullName evidence="3">NADH oxidase</fullName>
        <shortName evidence="3">NOXase</shortName>
        <ecNumber evidence="3">1.6.3.4</ecNumber>
    </recommendedName>
</protein>
<sequence length="459" mass="50212">MSKIVVVGANHAGTACINTMLDNFGNENEIVVFDQNSNISFLGCGMALWIGEQIDGAEGLFYSDKEKLEAKGAKVYMNSPVLSIDYDAKVVTAEVEGKEHKESYEKLIFATGSTPILPPIEGVEIVKGNREFKATLENVQFVKLYQNAEEVINKLSDKSQHLDRIAVVGGGYIGVELAEAFERLGKEVVLVDIVDTVLNGYYDKDFTQMMAKNLEDHNIRLALGQTVKAIEGDGKVERLITDKESFDVDMVILAVGFRPNTALADGKIELFRNGAFLVDKKQETSIPGVYAVGDCATVYDNARKDTSYIALASNAVRTGIVGAYNACGHELEGIGVQGSNGISIYGLHMVSTGLTLEKAKAAGYNATETGFNDLQKPEFMKHDNHEVAIKIVFDKDSREILGAQMVSHDIAISMGIHMFSLAIQEHVTIDKLALTDLFFLPHFNKPYNYITMAALTAEK</sequence>